<keyword id="KW-0716">Sensory transduction</keyword>
<evidence type="ECO:0000305" key="1"/>
<comment type="similarity">
    <text evidence="1">Belongs to the arrestin family.</text>
</comment>
<sequence length="381" mass="42747">MVYNFKVFKKCAPNGKITLYMAKRDFVDHISTVEPIDGVVLLDEEYVRGRKVFGQMVCTFRYGREEDEVMGLNFYKELFLASEQIYPPPEKRNYELSRTQERLIKKLGDGAIPFRLTVPPGAPGSVILQPGLEDDGEPCGVQYYVKIFVGDSEIDRSHRRSTVALGIRKVQYAPAKPGPQPCTVVRKDFVLSPGQLELELTLDKQLYIHGETVAVNMCVRNHSNKVVKKIKACIQQGVDVVLFQNGQYRNIVASIETQDGCPLQPGSSLQKVLHLTPTLAHNRDKRGIALDGQLKRSDTTLASTTLLLDPDQRDAFGIVVSYSAKVKLYLGAISGELVAELPFILMHPKEGRVKMIHADSQADVEMFRQDTVHHQESVEVY</sequence>
<protein>
    <recommendedName>
        <fullName>Arrestin homolog</fullName>
    </recommendedName>
</protein>
<feature type="chain" id="PRO_0000205220" description="Arrestin homolog">
    <location>
        <begin position="1"/>
        <end position="381"/>
    </location>
</feature>
<accession>P55274</accession>
<organism>
    <name type="scientific">Heliothis virescens</name>
    <name type="common">Tobacco budworm moth</name>
    <dbReference type="NCBI Taxonomy" id="7102"/>
    <lineage>
        <taxon>Eukaryota</taxon>
        <taxon>Metazoa</taxon>
        <taxon>Ecdysozoa</taxon>
        <taxon>Arthropoda</taxon>
        <taxon>Hexapoda</taxon>
        <taxon>Insecta</taxon>
        <taxon>Pterygota</taxon>
        <taxon>Neoptera</taxon>
        <taxon>Endopterygota</taxon>
        <taxon>Lepidoptera</taxon>
        <taxon>Glossata</taxon>
        <taxon>Ditrysia</taxon>
        <taxon>Noctuoidea</taxon>
        <taxon>Noctuidae</taxon>
        <taxon>Heliothinae</taxon>
        <taxon>Heliothis</taxon>
    </lineage>
</organism>
<name>ARRH_HELVI</name>
<reference key="1">
    <citation type="journal article" date="1993" name="Cell. Signal.">
        <title>Arrestin-subtypes in insect antennae.</title>
        <authorList>
            <person name="Raming K."/>
            <person name="Freitag J."/>
            <person name="Krieger J."/>
            <person name="Breer H."/>
        </authorList>
    </citation>
    <scope>NUCLEOTIDE SEQUENCE</scope>
    <source>
        <tissue>Antenna</tissue>
    </source>
</reference>
<proteinExistence type="inferred from homology"/>
<dbReference type="PIR" id="B56607">
    <property type="entry name" value="B56607"/>
</dbReference>
<dbReference type="SMR" id="P55274"/>
<dbReference type="GO" id="GO:0005737">
    <property type="term" value="C:cytoplasm"/>
    <property type="evidence" value="ECO:0007669"/>
    <property type="project" value="TreeGrafter"/>
</dbReference>
<dbReference type="GO" id="GO:0001664">
    <property type="term" value="F:G protein-coupled receptor binding"/>
    <property type="evidence" value="ECO:0007669"/>
    <property type="project" value="TreeGrafter"/>
</dbReference>
<dbReference type="GO" id="GO:0002031">
    <property type="term" value="P:G protein-coupled receptor internalization"/>
    <property type="evidence" value="ECO:0007669"/>
    <property type="project" value="TreeGrafter"/>
</dbReference>
<dbReference type="GO" id="GO:0007165">
    <property type="term" value="P:signal transduction"/>
    <property type="evidence" value="ECO:0007669"/>
    <property type="project" value="InterPro"/>
</dbReference>
<dbReference type="FunFam" id="2.60.40.840:FF:000002">
    <property type="entry name" value="Arrestin 3"/>
    <property type="match status" value="1"/>
</dbReference>
<dbReference type="Gene3D" id="2.60.40.640">
    <property type="match status" value="1"/>
</dbReference>
<dbReference type="Gene3D" id="2.60.40.840">
    <property type="match status" value="1"/>
</dbReference>
<dbReference type="InterPro" id="IPR000698">
    <property type="entry name" value="Arrestin"/>
</dbReference>
<dbReference type="InterPro" id="IPR014752">
    <property type="entry name" value="Arrestin-like_C"/>
</dbReference>
<dbReference type="InterPro" id="IPR011021">
    <property type="entry name" value="Arrestin-like_N"/>
</dbReference>
<dbReference type="InterPro" id="IPR011022">
    <property type="entry name" value="Arrestin_C-like"/>
</dbReference>
<dbReference type="InterPro" id="IPR017864">
    <property type="entry name" value="Arrestin_CS"/>
</dbReference>
<dbReference type="InterPro" id="IPR014753">
    <property type="entry name" value="Arrestin_N"/>
</dbReference>
<dbReference type="InterPro" id="IPR014756">
    <property type="entry name" value="Ig_E-set"/>
</dbReference>
<dbReference type="PANTHER" id="PTHR11792">
    <property type="entry name" value="ARRESTIN"/>
    <property type="match status" value="1"/>
</dbReference>
<dbReference type="PANTHER" id="PTHR11792:SF16">
    <property type="entry name" value="PHOSRESTIN-2"/>
    <property type="match status" value="1"/>
</dbReference>
<dbReference type="Pfam" id="PF02752">
    <property type="entry name" value="Arrestin_C"/>
    <property type="match status" value="1"/>
</dbReference>
<dbReference type="Pfam" id="PF00339">
    <property type="entry name" value="Arrestin_N"/>
    <property type="match status" value="1"/>
</dbReference>
<dbReference type="PRINTS" id="PR00309">
    <property type="entry name" value="ARRESTIN"/>
</dbReference>
<dbReference type="SMART" id="SM01017">
    <property type="entry name" value="Arrestin_C"/>
    <property type="match status" value="1"/>
</dbReference>
<dbReference type="SUPFAM" id="SSF81296">
    <property type="entry name" value="E set domains"/>
    <property type="match status" value="2"/>
</dbReference>
<dbReference type="PROSITE" id="PS00295">
    <property type="entry name" value="ARRESTINS"/>
    <property type="match status" value="1"/>
</dbReference>